<evidence type="ECO:0000255" key="1">
    <source>
        <dbReference type="HAMAP-Rule" id="MF_01364"/>
    </source>
</evidence>
<evidence type="ECO:0000305" key="2"/>
<comment type="function">
    <text evidence="1">Binds 16S rRNA, required for the assembly of 30S particles and may also be responsible for determining the conformation of the 16S rRNA at the A site.</text>
</comment>
<comment type="cofactor">
    <cofactor evidence="1">
        <name>Zn(2+)</name>
        <dbReference type="ChEBI" id="CHEBI:29105"/>
    </cofactor>
    <text evidence="1">Binds 1 zinc ion per subunit.</text>
</comment>
<comment type="subunit">
    <text evidence="1">Part of the 30S ribosomal subunit. Contacts proteins S3 and S10.</text>
</comment>
<comment type="similarity">
    <text evidence="1">Belongs to the universal ribosomal protein uS14 family. Zinc-binding uS14 subfamily.</text>
</comment>
<dbReference type="EMBL" id="CP000667">
    <property type="protein sequence ID" value="ABP56340.1"/>
    <property type="molecule type" value="Genomic_DNA"/>
</dbReference>
<dbReference type="RefSeq" id="WP_007073023.1">
    <property type="nucleotide sequence ID" value="NC_009380.1"/>
</dbReference>
<dbReference type="SMR" id="A4XBN3"/>
<dbReference type="STRING" id="369723.Strop_3910"/>
<dbReference type="KEGG" id="stp:Strop_3910"/>
<dbReference type="eggNOG" id="COG0199">
    <property type="taxonomic scope" value="Bacteria"/>
</dbReference>
<dbReference type="HOGENOM" id="CLU_139869_3_0_11"/>
<dbReference type="Proteomes" id="UP000000235">
    <property type="component" value="Chromosome"/>
</dbReference>
<dbReference type="GO" id="GO:0005737">
    <property type="term" value="C:cytoplasm"/>
    <property type="evidence" value="ECO:0007669"/>
    <property type="project" value="UniProtKB-ARBA"/>
</dbReference>
<dbReference type="GO" id="GO:0015935">
    <property type="term" value="C:small ribosomal subunit"/>
    <property type="evidence" value="ECO:0007669"/>
    <property type="project" value="TreeGrafter"/>
</dbReference>
<dbReference type="GO" id="GO:0019843">
    <property type="term" value="F:rRNA binding"/>
    <property type="evidence" value="ECO:0007669"/>
    <property type="project" value="UniProtKB-UniRule"/>
</dbReference>
<dbReference type="GO" id="GO:0003735">
    <property type="term" value="F:structural constituent of ribosome"/>
    <property type="evidence" value="ECO:0007669"/>
    <property type="project" value="InterPro"/>
</dbReference>
<dbReference type="GO" id="GO:0008270">
    <property type="term" value="F:zinc ion binding"/>
    <property type="evidence" value="ECO:0007669"/>
    <property type="project" value="UniProtKB-UniRule"/>
</dbReference>
<dbReference type="GO" id="GO:0006412">
    <property type="term" value="P:translation"/>
    <property type="evidence" value="ECO:0007669"/>
    <property type="project" value="UniProtKB-UniRule"/>
</dbReference>
<dbReference type="FunFam" id="4.10.830.10:FF:000001">
    <property type="entry name" value="30S ribosomal protein S14 type Z"/>
    <property type="match status" value="1"/>
</dbReference>
<dbReference type="Gene3D" id="4.10.830.10">
    <property type="entry name" value="30s Ribosomal Protein S14, Chain N"/>
    <property type="match status" value="1"/>
</dbReference>
<dbReference type="HAMAP" id="MF_01364_B">
    <property type="entry name" value="Ribosomal_uS14_2_B"/>
    <property type="match status" value="1"/>
</dbReference>
<dbReference type="InterPro" id="IPR001209">
    <property type="entry name" value="Ribosomal_uS14"/>
</dbReference>
<dbReference type="InterPro" id="IPR023053">
    <property type="entry name" value="Ribosomal_uS14_bact"/>
</dbReference>
<dbReference type="InterPro" id="IPR018271">
    <property type="entry name" value="Ribosomal_uS14_CS"/>
</dbReference>
<dbReference type="InterPro" id="IPR043140">
    <property type="entry name" value="Ribosomal_uS14_sf"/>
</dbReference>
<dbReference type="NCBIfam" id="NF005974">
    <property type="entry name" value="PRK08061.1"/>
    <property type="match status" value="1"/>
</dbReference>
<dbReference type="PANTHER" id="PTHR19836">
    <property type="entry name" value="30S RIBOSOMAL PROTEIN S14"/>
    <property type="match status" value="1"/>
</dbReference>
<dbReference type="PANTHER" id="PTHR19836:SF19">
    <property type="entry name" value="SMALL RIBOSOMAL SUBUNIT PROTEIN US14M"/>
    <property type="match status" value="1"/>
</dbReference>
<dbReference type="Pfam" id="PF00253">
    <property type="entry name" value="Ribosomal_S14"/>
    <property type="match status" value="1"/>
</dbReference>
<dbReference type="SUPFAM" id="SSF57716">
    <property type="entry name" value="Glucocorticoid receptor-like (DNA-binding domain)"/>
    <property type="match status" value="1"/>
</dbReference>
<dbReference type="PROSITE" id="PS00527">
    <property type="entry name" value="RIBOSOMAL_S14"/>
    <property type="match status" value="1"/>
</dbReference>
<protein>
    <recommendedName>
        <fullName evidence="1">Small ribosomal subunit protein uS14B</fullName>
    </recommendedName>
    <alternativeName>
        <fullName evidence="2">30S ribosomal protein S14 type Z</fullName>
    </alternativeName>
</protein>
<sequence>MAKKALILKAAAKPKFSVRAYTRCQRCGRPKAVYRKFGLCRVCIREMAHRGELPGVSKASW</sequence>
<reference key="1">
    <citation type="journal article" date="2007" name="Proc. Natl. Acad. Sci. U.S.A.">
        <title>Genome sequencing reveals complex secondary metabolome in the marine actinomycete Salinispora tropica.</title>
        <authorList>
            <person name="Udwary D.W."/>
            <person name="Zeigler L."/>
            <person name="Asolkar R.N."/>
            <person name="Singan V."/>
            <person name="Lapidus A."/>
            <person name="Fenical W."/>
            <person name="Jensen P.R."/>
            <person name="Moore B.S."/>
        </authorList>
    </citation>
    <scope>NUCLEOTIDE SEQUENCE [LARGE SCALE GENOMIC DNA]</scope>
    <source>
        <strain>ATCC BAA-916 / DSM 44818 / JCM 13857 / NBRC 105044 / CNB-440</strain>
    </source>
</reference>
<proteinExistence type="inferred from homology"/>
<keyword id="KW-0479">Metal-binding</keyword>
<keyword id="KW-1185">Reference proteome</keyword>
<keyword id="KW-0687">Ribonucleoprotein</keyword>
<keyword id="KW-0689">Ribosomal protein</keyword>
<keyword id="KW-0694">RNA-binding</keyword>
<keyword id="KW-0699">rRNA-binding</keyword>
<keyword id="KW-0862">Zinc</keyword>
<name>RS14Z_SALTO</name>
<organism>
    <name type="scientific">Salinispora tropica (strain ATCC BAA-916 / DSM 44818 / JCM 13857 / NBRC 105044 / CNB-440)</name>
    <dbReference type="NCBI Taxonomy" id="369723"/>
    <lineage>
        <taxon>Bacteria</taxon>
        <taxon>Bacillati</taxon>
        <taxon>Actinomycetota</taxon>
        <taxon>Actinomycetes</taxon>
        <taxon>Micromonosporales</taxon>
        <taxon>Micromonosporaceae</taxon>
        <taxon>Salinispora</taxon>
    </lineage>
</organism>
<feature type="chain" id="PRO_1000087021" description="Small ribosomal subunit protein uS14B">
    <location>
        <begin position="1"/>
        <end position="61"/>
    </location>
</feature>
<feature type="binding site" evidence="1">
    <location>
        <position position="24"/>
    </location>
    <ligand>
        <name>Zn(2+)</name>
        <dbReference type="ChEBI" id="CHEBI:29105"/>
    </ligand>
</feature>
<feature type="binding site" evidence="1">
    <location>
        <position position="27"/>
    </location>
    <ligand>
        <name>Zn(2+)</name>
        <dbReference type="ChEBI" id="CHEBI:29105"/>
    </ligand>
</feature>
<feature type="binding site" evidence="1">
    <location>
        <position position="40"/>
    </location>
    <ligand>
        <name>Zn(2+)</name>
        <dbReference type="ChEBI" id="CHEBI:29105"/>
    </ligand>
</feature>
<feature type="binding site" evidence="1">
    <location>
        <position position="43"/>
    </location>
    <ligand>
        <name>Zn(2+)</name>
        <dbReference type="ChEBI" id="CHEBI:29105"/>
    </ligand>
</feature>
<accession>A4XBN3</accession>
<gene>
    <name evidence="1" type="primary">rpsZ</name>
    <name evidence="1" type="synonym">rpsN</name>
    <name type="ordered locus">Strop_3910</name>
</gene>